<dbReference type="EMBL" id="CT573326">
    <property type="protein sequence ID" value="CAK16781.1"/>
    <property type="molecule type" value="Genomic_DNA"/>
</dbReference>
<dbReference type="SMR" id="Q1I6F4"/>
<dbReference type="STRING" id="384676.PSEEN4087"/>
<dbReference type="KEGG" id="pen:PSEEN4087"/>
<dbReference type="eggNOG" id="COG0823">
    <property type="taxonomic scope" value="Bacteria"/>
</dbReference>
<dbReference type="HOGENOM" id="CLU_047123_0_0_6"/>
<dbReference type="OrthoDB" id="9802240at2"/>
<dbReference type="Proteomes" id="UP000000658">
    <property type="component" value="Chromosome"/>
</dbReference>
<dbReference type="GO" id="GO:0042597">
    <property type="term" value="C:periplasmic space"/>
    <property type="evidence" value="ECO:0007669"/>
    <property type="project" value="UniProtKB-SubCell"/>
</dbReference>
<dbReference type="GO" id="GO:0051301">
    <property type="term" value="P:cell division"/>
    <property type="evidence" value="ECO:0007669"/>
    <property type="project" value="UniProtKB-UniRule"/>
</dbReference>
<dbReference type="GO" id="GO:0017038">
    <property type="term" value="P:protein import"/>
    <property type="evidence" value="ECO:0007669"/>
    <property type="project" value="InterPro"/>
</dbReference>
<dbReference type="Gene3D" id="2.120.10.30">
    <property type="entry name" value="TolB, C-terminal domain"/>
    <property type="match status" value="1"/>
</dbReference>
<dbReference type="Gene3D" id="3.40.50.10070">
    <property type="entry name" value="TolB, N-terminal domain"/>
    <property type="match status" value="1"/>
</dbReference>
<dbReference type="HAMAP" id="MF_00671">
    <property type="entry name" value="TolB"/>
    <property type="match status" value="1"/>
</dbReference>
<dbReference type="InterPro" id="IPR011042">
    <property type="entry name" value="6-blade_b-propeller_TolB-like"/>
</dbReference>
<dbReference type="InterPro" id="IPR011659">
    <property type="entry name" value="PD40"/>
</dbReference>
<dbReference type="InterPro" id="IPR014167">
    <property type="entry name" value="Tol-Pal_TolB"/>
</dbReference>
<dbReference type="InterPro" id="IPR007195">
    <property type="entry name" value="TolB_N"/>
</dbReference>
<dbReference type="NCBIfam" id="TIGR02800">
    <property type="entry name" value="propeller_TolB"/>
    <property type="match status" value="1"/>
</dbReference>
<dbReference type="PANTHER" id="PTHR36842:SF1">
    <property type="entry name" value="PROTEIN TOLB"/>
    <property type="match status" value="1"/>
</dbReference>
<dbReference type="PANTHER" id="PTHR36842">
    <property type="entry name" value="PROTEIN TOLB HOMOLOG"/>
    <property type="match status" value="1"/>
</dbReference>
<dbReference type="Pfam" id="PF07676">
    <property type="entry name" value="PD40"/>
    <property type="match status" value="4"/>
</dbReference>
<dbReference type="Pfam" id="PF04052">
    <property type="entry name" value="TolB_N"/>
    <property type="match status" value="1"/>
</dbReference>
<dbReference type="SUPFAM" id="SSF52964">
    <property type="entry name" value="TolB, N-terminal domain"/>
    <property type="match status" value="1"/>
</dbReference>
<dbReference type="SUPFAM" id="SSF69304">
    <property type="entry name" value="Tricorn protease N-terminal domain"/>
    <property type="match status" value="1"/>
</dbReference>
<keyword id="KW-0131">Cell cycle</keyword>
<keyword id="KW-0132">Cell division</keyword>
<keyword id="KW-0574">Periplasm</keyword>
<keyword id="KW-0732">Signal</keyword>
<gene>
    <name evidence="1" type="primary">tolB</name>
    <name type="ordered locus">PSEEN4087</name>
</gene>
<organism>
    <name type="scientific">Pseudomonas entomophila (strain L48)</name>
    <dbReference type="NCBI Taxonomy" id="384676"/>
    <lineage>
        <taxon>Bacteria</taxon>
        <taxon>Pseudomonadati</taxon>
        <taxon>Pseudomonadota</taxon>
        <taxon>Gammaproteobacteria</taxon>
        <taxon>Pseudomonadales</taxon>
        <taxon>Pseudomonadaceae</taxon>
        <taxon>Pseudomonas</taxon>
    </lineage>
</organism>
<accession>Q1I6F4</accession>
<proteinExistence type="inferred from homology"/>
<sequence>MIKRLRGLLVLLCCVAGMAMAEEKNILVTSGSDRATPIAVVPFGVQGGSVLPEDMADIISNDLRNSGYYGPIPRQNMISLPTQASEVIFRDWKALGAQYVMVGSIVPSGGRLQVSYALFNVATEQQVLTGSVAGGVDQLRDMAHYIADQSFEKLTGIKGAFSTRMLYVTAERFSTNNTRYTLQRSDYDGARAVTLLQSREPILSPRFAPDGKRIAYVSFEQKRPRIFIQHIDTGRREQITNFEGLNGAPAWSPDGTRLAFVLSKDGNPDIYVMNVASRQITRVTAGPGINTEPFWGKDGNTLYFTSDRGGKPQIYKQSVGGGGAERVTFVGNYNANPKLSADEKTLVMIHRQQGFTNFKVAAQDLQRGSVKILTETSLDESPTVAPNGTMLIYATRQQGRGVLMLVSLNGRVRLPLPTAQGEVREPSWSPYLN</sequence>
<evidence type="ECO:0000255" key="1">
    <source>
        <dbReference type="HAMAP-Rule" id="MF_00671"/>
    </source>
</evidence>
<feature type="signal peptide" evidence="1">
    <location>
        <begin position="1"/>
        <end position="21"/>
    </location>
</feature>
<feature type="chain" id="PRO_1000026706" description="Tol-Pal system protein TolB" evidence="1">
    <location>
        <begin position="22"/>
        <end position="433"/>
    </location>
</feature>
<protein>
    <recommendedName>
        <fullName evidence="1">Tol-Pal system protein TolB</fullName>
    </recommendedName>
</protein>
<reference key="1">
    <citation type="journal article" date="2006" name="Nat. Biotechnol.">
        <title>Complete genome sequence of the entomopathogenic and metabolically versatile soil bacterium Pseudomonas entomophila.</title>
        <authorList>
            <person name="Vodovar N."/>
            <person name="Vallenet D."/>
            <person name="Cruveiller S."/>
            <person name="Rouy Z."/>
            <person name="Barbe V."/>
            <person name="Acosta C."/>
            <person name="Cattolico L."/>
            <person name="Jubin C."/>
            <person name="Lajus A."/>
            <person name="Segurens B."/>
            <person name="Vacherie B."/>
            <person name="Wincker P."/>
            <person name="Weissenbach J."/>
            <person name="Lemaitre B."/>
            <person name="Medigue C."/>
            <person name="Boccard F."/>
        </authorList>
    </citation>
    <scope>NUCLEOTIDE SEQUENCE [LARGE SCALE GENOMIC DNA]</scope>
    <source>
        <strain>L48</strain>
    </source>
</reference>
<name>TOLB_PSEE4</name>
<comment type="function">
    <text evidence="1">Part of the Tol-Pal system, which plays a role in outer membrane invagination during cell division and is important for maintaining outer membrane integrity.</text>
</comment>
<comment type="subunit">
    <text evidence="1">The Tol-Pal system is composed of five core proteins: the inner membrane proteins TolA, TolQ and TolR, the periplasmic protein TolB and the outer membrane protein Pal. They form a network linking the inner and outer membranes and the peptidoglycan layer.</text>
</comment>
<comment type="subcellular location">
    <subcellularLocation>
        <location evidence="1">Periplasm</location>
    </subcellularLocation>
</comment>
<comment type="similarity">
    <text evidence="1">Belongs to the TolB family.</text>
</comment>